<dbReference type="EC" id="2.8.1.13" evidence="1"/>
<dbReference type="EMBL" id="CT971583">
    <property type="protein sequence ID" value="CAK24164.1"/>
    <property type="molecule type" value="Genomic_DNA"/>
</dbReference>
<dbReference type="SMR" id="A5GMJ9"/>
<dbReference type="STRING" id="32051.SynWH7803_1738"/>
<dbReference type="KEGG" id="syx:SynWH7803_1738"/>
<dbReference type="eggNOG" id="COG0482">
    <property type="taxonomic scope" value="Bacteria"/>
</dbReference>
<dbReference type="HOGENOM" id="CLU_035188_0_0_3"/>
<dbReference type="OrthoDB" id="9800696at2"/>
<dbReference type="Proteomes" id="UP000001566">
    <property type="component" value="Chromosome"/>
</dbReference>
<dbReference type="GO" id="GO:0005737">
    <property type="term" value="C:cytoplasm"/>
    <property type="evidence" value="ECO:0007669"/>
    <property type="project" value="UniProtKB-SubCell"/>
</dbReference>
<dbReference type="GO" id="GO:0005524">
    <property type="term" value="F:ATP binding"/>
    <property type="evidence" value="ECO:0007669"/>
    <property type="project" value="UniProtKB-KW"/>
</dbReference>
<dbReference type="GO" id="GO:0000049">
    <property type="term" value="F:tRNA binding"/>
    <property type="evidence" value="ECO:0007669"/>
    <property type="project" value="UniProtKB-KW"/>
</dbReference>
<dbReference type="GO" id="GO:0103016">
    <property type="term" value="F:tRNA-uridine 2-sulfurtransferase activity"/>
    <property type="evidence" value="ECO:0007669"/>
    <property type="project" value="UniProtKB-EC"/>
</dbReference>
<dbReference type="GO" id="GO:0002143">
    <property type="term" value="P:tRNA wobble position uridine thiolation"/>
    <property type="evidence" value="ECO:0007669"/>
    <property type="project" value="TreeGrafter"/>
</dbReference>
<dbReference type="CDD" id="cd01998">
    <property type="entry name" value="MnmA_TRMU-like"/>
    <property type="match status" value="1"/>
</dbReference>
<dbReference type="FunFam" id="2.30.30.280:FF:000001">
    <property type="entry name" value="tRNA-specific 2-thiouridylase MnmA"/>
    <property type="match status" value="1"/>
</dbReference>
<dbReference type="Gene3D" id="2.30.30.280">
    <property type="entry name" value="Adenine nucleotide alpha hydrolases-like domains"/>
    <property type="match status" value="1"/>
</dbReference>
<dbReference type="Gene3D" id="3.40.50.620">
    <property type="entry name" value="HUPs"/>
    <property type="match status" value="1"/>
</dbReference>
<dbReference type="Gene3D" id="2.40.30.10">
    <property type="entry name" value="Translation factors"/>
    <property type="match status" value="1"/>
</dbReference>
<dbReference type="HAMAP" id="MF_00144">
    <property type="entry name" value="tRNA_thiouridyl_MnmA"/>
    <property type="match status" value="1"/>
</dbReference>
<dbReference type="InterPro" id="IPR004506">
    <property type="entry name" value="MnmA-like"/>
</dbReference>
<dbReference type="InterPro" id="IPR046885">
    <property type="entry name" value="MnmA-like_C"/>
</dbReference>
<dbReference type="InterPro" id="IPR046884">
    <property type="entry name" value="MnmA-like_central"/>
</dbReference>
<dbReference type="InterPro" id="IPR023382">
    <property type="entry name" value="MnmA-like_central_sf"/>
</dbReference>
<dbReference type="InterPro" id="IPR014729">
    <property type="entry name" value="Rossmann-like_a/b/a_fold"/>
</dbReference>
<dbReference type="NCBIfam" id="NF001138">
    <property type="entry name" value="PRK00143.1"/>
    <property type="match status" value="1"/>
</dbReference>
<dbReference type="NCBIfam" id="TIGR00420">
    <property type="entry name" value="trmU"/>
    <property type="match status" value="1"/>
</dbReference>
<dbReference type="PANTHER" id="PTHR11933:SF5">
    <property type="entry name" value="MITOCHONDRIAL TRNA-SPECIFIC 2-THIOURIDYLASE 1"/>
    <property type="match status" value="1"/>
</dbReference>
<dbReference type="PANTHER" id="PTHR11933">
    <property type="entry name" value="TRNA 5-METHYLAMINOMETHYL-2-THIOURIDYLATE -METHYLTRANSFERASE"/>
    <property type="match status" value="1"/>
</dbReference>
<dbReference type="Pfam" id="PF03054">
    <property type="entry name" value="tRNA_Me_trans"/>
    <property type="match status" value="1"/>
</dbReference>
<dbReference type="Pfam" id="PF20258">
    <property type="entry name" value="tRNA_Me_trans_C"/>
    <property type="match status" value="1"/>
</dbReference>
<dbReference type="Pfam" id="PF20259">
    <property type="entry name" value="tRNA_Me_trans_M"/>
    <property type="match status" value="1"/>
</dbReference>
<dbReference type="SUPFAM" id="SSF52402">
    <property type="entry name" value="Adenine nucleotide alpha hydrolases-like"/>
    <property type="match status" value="1"/>
</dbReference>
<feature type="chain" id="PRO_0000349832" description="tRNA-specific 2-thiouridylase MnmA">
    <location>
        <begin position="1"/>
        <end position="389"/>
    </location>
</feature>
<feature type="region of interest" description="Interaction with tRNA" evidence="1">
    <location>
        <begin position="169"/>
        <end position="171"/>
    </location>
</feature>
<feature type="region of interest" description="Interaction with tRNA" evidence="1">
    <location>
        <begin position="326"/>
        <end position="327"/>
    </location>
</feature>
<feature type="active site" description="Nucleophile" evidence="1">
    <location>
        <position position="120"/>
    </location>
</feature>
<feature type="active site" description="Cysteine persulfide intermediate" evidence="1">
    <location>
        <position position="219"/>
    </location>
</feature>
<feature type="binding site" evidence="1">
    <location>
        <begin position="33"/>
        <end position="40"/>
    </location>
    <ligand>
        <name>ATP</name>
        <dbReference type="ChEBI" id="CHEBI:30616"/>
    </ligand>
</feature>
<feature type="binding site" evidence="1">
    <location>
        <position position="59"/>
    </location>
    <ligand>
        <name>ATP</name>
        <dbReference type="ChEBI" id="CHEBI:30616"/>
    </ligand>
</feature>
<feature type="binding site" evidence="1">
    <location>
        <position position="145"/>
    </location>
    <ligand>
        <name>ATP</name>
        <dbReference type="ChEBI" id="CHEBI:30616"/>
    </ligand>
</feature>
<feature type="site" description="Interaction with tRNA" evidence="1">
    <location>
        <position position="146"/>
    </location>
</feature>
<feature type="site" description="Interaction with tRNA" evidence="1">
    <location>
        <position position="369"/>
    </location>
</feature>
<feature type="disulfide bond" description="Alternate" evidence="1">
    <location>
        <begin position="120"/>
        <end position="219"/>
    </location>
</feature>
<evidence type="ECO:0000255" key="1">
    <source>
        <dbReference type="HAMAP-Rule" id="MF_00144"/>
    </source>
</evidence>
<keyword id="KW-0067">ATP-binding</keyword>
<keyword id="KW-0963">Cytoplasm</keyword>
<keyword id="KW-1015">Disulfide bond</keyword>
<keyword id="KW-0547">Nucleotide-binding</keyword>
<keyword id="KW-1185">Reference proteome</keyword>
<keyword id="KW-0694">RNA-binding</keyword>
<keyword id="KW-0808">Transferase</keyword>
<keyword id="KW-0819">tRNA processing</keyword>
<keyword id="KW-0820">tRNA-binding</keyword>
<comment type="function">
    <text evidence="1">Catalyzes the 2-thiolation of uridine at the wobble position (U34) of tRNA, leading to the formation of s(2)U34.</text>
</comment>
<comment type="catalytic activity">
    <reaction evidence="1">
        <text>S-sulfanyl-L-cysteinyl-[protein] + uridine(34) in tRNA + AH2 + ATP = 2-thiouridine(34) in tRNA + L-cysteinyl-[protein] + A + AMP + diphosphate + H(+)</text>
        <dbReference type="Rhea" id="RHEA:47032"/>
        <dbReference type="Rhea" id="RHEA-COMP:10131"/>
        <dbReference type="Rhea" id="RHEA-COMP:11726"/>
        <dbReference type="Rhea" id="RHEA-COMP:11727"/>
        <dbReference type="Rhea" id="RHEA-COMP:11728"/>
        <dbReference type="ChEBI" id="CHEBI:13193"/>
        <dbReference type="ChEBI" id="CHEBI:15378"/>
        <dbReference type="ChEBI" id="CHEBI:17499"/>
        <dbReference type="ChEBI" id="CHEBI:29950"/>
        <dbReference type="ChEBI" id="CHEBI:30616"/>
        <dbReference type="ChEBI" id="CHEBI:33019"/>
        <dbReference type="ChEBI" id="CHEBI:61963"/>
        <dbReference type="ChEBI" id="CHEBI:65315"/>
        <dbReference type="ChEBI" id="CHEBI:87170"/>
        <dbReference type="ChEBI" id="CHEBI:456215"/>
        <dbReference type="EC" id="2.8.1.13"/>
    </reaction>
</comment>
<comment type="subcellular location">
    <subcellularLocation>
        <location evidence="1">Cytoplasm</location>
    </subcellularLocation>
</comment>
<comment type="similarity">
    <text evidence="1">Belongs to the MnmA/TRMU family.</text>
</comment>
<sequence>MPAAFPVTAATPAGAEALDRLRHWPGEHRVAVGLSGGVDSSLTAALLVEAGWEVEGLTLWLMSGKGACCAEGLVDAAGICEQLEIPHHVVDSRDTFQREIVNGLIEGYQAGITPLPCSRCNRAVKFSPMLQWAQEKRGLARIATGHYARLRFDETTGRWRLLRGLDARKDQSYFLYDLTQEVLARVVFPLGELTKPDTRLEAARHGLRTAAKPESQDLCLADHHGSMRAFLDAYLPPRQGEIVLQDGTVVGEHDGIEHFTIGQRKGLGVAWSEPLHVVRLDAAMNRVVVATRDQAGRSHCVVGAINWVSMAPPAPEHSQMVQVQVRYRSAPVPARLTTMTAEASDAAAERPHRCRLDFDEPQFSITPGQAAVFYDGDAVLGGGLIQTSA</sequence>
<organism>
    <name type="scientific">Synechococcus sp. (strain WH7803)</name>
    <dbReference type="NCBI Taxonomy" id="32051"/>
    <lineage>
        <taxon>Bacteria</taxon>
        <taxon>Bacillati</taxon>
        <taxon>Cyanobacteriota</taxon>
        <taxon>Cyanophyceae</taxon>
        <taxon>Synechococcales</taxon>
        <taxon>Synechococcaceae</taxon>
        <taxon>Synechococcus</taxon>
    </lineage>
</organism>
<protein>
    <recommendedName>
        <fullName evidence="1">tRNA-specific 2-thiouridylase MnmA</fullName>
        <ecNumber evidence="1">2.8.1.13</ecNumber>
    </recommendedName>
</protein>
<gene>
    <name evidence="1" type="primary">mnmA</name>
    <name type="ordered locus">SynWH7803_1738</name>
</gene>
<proteinExistence type="inferred from homology"/>
<reference key="1">
    <citation type="submission" date="2006-05" db="EMBL/GenBank/DDBJ databases">
        <authorList>
            <consortium name="Genoscope"/>
        </authorList>
    </citation>
    <scope>NUCLEOTIDE SEQUENCE [LARGE SCALE GENOMIC DNA]</scope>
    <source>
        <strain>WH7803</strain>
    </source>
</reference>
<name>MNMA_SYNPW</name>
<accession>A5GMJ9</accession>